<proteinExistence type="inferred from homology"/>
<protein>
    <recommendedName>
        <fullName evidence="1">Large ribosomal subunit protein bL32c</fullName>
    </recommendedName>
    <alternativeName>
        <fullName evidence="3">50S ribosomal protein L32, chloroplastic</fullName>
    </alternativeName>
</protein>
<evidence type="ECO:0000255" key="1">
    <source>
        <dbReference type="HAMAP-Rule" id="MF_00340"/>
    </source>
</evidence>
<evidence type="ECO:0000256" key="2">
    <source>
        <dbReference type="SAM" id="MobiDB-lite"/>
    </source>
</evidence>
<evidence type="ECO:0000305" key="3"/>
<evidence type="ECO:0000312" key="4">
    <source>
        <dbReference type="Proteomes" id="UP000006591"/>
    </source>
</evidence>
<reference key="1">
    <citation type="journal article" date="2004" name="Gene">
        <title>The complete nucleotide sequence of wild rice (Oryza nivara) chloroplast genome: first genome wide comparative sequence analysis of wild and cultivated rice.</title>
        <authorList>
            <person name="Masood M.S."/>
            <person name="Nishikawa T."/>
            <person name="Fukuoka S."/>
            <person name="Njenga P.K."/>
            <person name="Tsudzuki T."/>
            <person name="Kadowaki K."/>
        </authorList>
    </citation>
    <scope>NUCLEOTIDE SEQUENCE [LARGE SCALE GENOMIC DNA]</scope>
    <source>
        <strain evidence="4">cv. SL10</strain>
    </source>
</reference>
<dbReference type="EMBL" id="AP006728">
    <property type="protein sequence ID" value="BAD26843.1"/>
    <property type="molecule type" value="Genomic_DNA"/>
</dbReference>
<dbReference type="RefSeq" id="YP_052813.1">
    <property type="nucleotide sequence ID" value="NC_005973.1"/>
</dbReference>
<dbReference type="SMR" id="Q6ENA9"/>
<dbReference type="STRING" id="4536.Q6ENA9"/>
<dbReference type="GeneID" id="2885937"/>
<dbReference type="Proteomes" id="UP000006591">
    <property type="component" value="Chloroplast"/>
</dbReference>
<dbReference type="GO" id="GO:0009507">
    <property type="term" value="C:chloroplast"/>
    <property type="evidence" value="ECO:0007669"/>
    <property type="project" value="UniProtKB-SubCell"/>
</dbReference>
<dbReference type="GO" id="GO:0015934">
    <property type="term" value="C:large ribosomal subunit"/>
    <property type="evidence" value="ECO:0007669"/>
    <property type="project" value="InterPro"/>
</dbReference>
<dbReference type="GO" id="GO:0009536">
    <property type="term" value="C:plastid"/>
    <property type="evidence" value="ECO:0000305"/>
    <property type="project" value="Gramene"/>
</dbReference>
<dbReference type="GO" id="GO:0003735">
    <property type="term" value="F:structural constituent of ribosome"/>
    <property type="evidence" value="ECO:0007669"/>
    <property type="project" value="InterPro"/>
</dbReference>
<dbReference type="GO" id="GO:0006412">
    <property type="term" value="P:translation"/>
    <property type="evidence" value="ECO:0007669"/>
    <property type="project" value="UniProtKB-UniRule"/>
</dbReference>
<dbReference type="HAMAP" id="MF_00340">
    <property type="entry name" value="Ribosomal_bL32"/>
    <property type="match status" value="1"/>
</dbReference>
<dbReference type="InterPro" id="IPR002677">
    <property type="entry name" value="Ribosomal_bL32"/>
</dbReference>
<dbReference type="InterPro" id="IPR044958">
    <property type="entry name" value="Ribosomal_bL32_plant/cyanobact"/>
</dbReference>
<dbReference type="InterPro" id="IPR011332">
    <property type="entry name" value="Ribosomal_zn-bd"/>
</dbReference>
<dbReference type="PANTHER" id="PTHR36083">
    <property type="entry name" value="50S RIBOSOMAL PROTEIN L32, CHLOROPLASTIC"/>
    <property type="match status" value="1"/>
</dbReference>
<dbReference type="PANTHER" id="PTHR36083:SF1">
    <property type="entry name" value="LARGE RIBOSOMAL SUBUNIT PROTEIN BL32C"/>
    <property type="match status" value="1"/>
</dbReference>
<dbReference type="Pfam" id="PF01783">
    <property type="entry name" value="Ribosomal_L32p"/>
    <property type="match status" value="1"/>
</dbReference>
<dbReference type="SUPFAM" id="SSF57829">
    <property type="entry name" value="Zn-binding ribosomal proteins"/>
    <property type="match status" value="1"/>
</dbReference>
<geneLocation type="chloroplast"/>
<feature type="chain" id="PRO_0000172469" description="Large ribosomal subunit protein bL32c">
    <location>
        <begin position="1"/>
        <end position="59"/>
    </location>
</feature>
<feature type="region of interest" description="Disordered" evidence="2">
    <location>
        <begin position="36"/>
        <end position="59"/>
    </location>
</feature>
<organism>
    <name type="scientific">Oryza nivara</name>
    <name type="common">Indian wild rice</name>
    <name type="synonym">Oryza sativa f. spontanea</name>
    <dbReference type="NCBI Taxonomy" id="4536"/>
    <lineage>
        <taxon>Eukaryota</taxon>
        <taxon>Viridiplantae</taxon>
        <taxon>Streptophyta</taxon>
        <taxon>Embryophyta</taxon>
        <taxon>Tracheophyta</taxon>
        <taxon>Spermatophyta</taxon>
        <taxon>Magnoliopsida</taxon>
        <taxon>Liliopsida</taxon>
        <taxon>Poales</taxon>
        <taxon>Poaceae</taxon>
        <taxon>BOP clade</taxon>
        <taxon>Oryzoideae</taxon>
        <taxon>Oryzeae</taxon>
        <taxon>Oryzinae</taxon>
        <taxon>Oryza</taxon>
    </lineage>
</organism>
<gene>
    <name evidence="1" type="primary">rpl32</name>
</gene>
<accession>Q6ENA9</accession>
<sequence length="59" mass="6904">MAVPKKRTSMSKKRIRKNLWKKKTYFSIVQSYSLAKSRSFSGVSEHPKPKGFSRQQTNK</sequence>
<comment type="subcellular location">
    <subcellularLocation>
        <location>Plastid</location>
        <location>Chloroplast</location>
    </subcellularLocation>
</comment>
<comment type="similarity">
    <text evidence="1">Belongs to the bacterial ribosomal protein bL32 family.</text>
</comment>
<name>RK32_ORYNI</name>
<keyword id="KW-0150">Chloroplast</keyword>
<keyword id="KW-0934">Plastid</keyword>
<keyword id="KW-1185">Reference proteome</keyword>
<keyword id="KW-0687">Ribonucleoprotein</keyword>
<keyword id="KW-0689">Ribosomal protein</keyword>